<accession>B8FHH7</accession>
<evidence type="ECO:0000255" key="1">
    <source>
        <dbReference type="HAMAP-Rule" id="MF_00012"/>
    </source>
</evidence>
<dbReference type="EC" id="4.2.1.9" evidence="1"/>
<dbReference type="EMBL" id="CP001322">
    <property type="protein sequence ID" value="ACL02265.1"/>
    <property type="molecule type" value="Genomic_DNA"/>
</dbReference>
<dbReference type="RefSeq" id="WP_012609705.1">
    <property type="nucleotide sequence ID" value="NC_011768.1"/>
</dbReference>
<dbReference type="SMR" id="B8FHH7"/>
<dbReference type="KEGG" id="dal:Dalk_0559"/>
<dbReference type="eggNOG" id="COG0129">
    <property type="taxonomic scope" value="Bacteria"/>
</dbReference>
<dbReference type="HOGENOM" id="CLU_014271_4_2_7"/>
<dbReference type="UniPathway" id="UPA00047">
    <property type="reaction ID" value="UER00057"/>
</dbReference>
<dbReference type="UniPathway" id="UPA00049">
    <property type="reaction ID" value="UER00061"/>
</dbReference>
<dbReference type="Proteomes" id="UP000000739">
    <property type="component" value="Chromosome"/>
</dbReference>
<dbReference type="GO" id="GO:0005829">
    <property type="term" value="C:cytosol"/>
    <property type="evidence" value="ECO:0007669"/>
    <property type="project" value="TreeGrafter"/>
</dbReference>
<dbReference type="GO" id="GO:0051537">
    <property type="term" value="F:2 iron, 2 sulfur cluster binding"/>
    <property type="evidence" value="ECO:0007669"/>
    <property type="project" value="UniProtKB-UniRule"/>
</dbReference>
<dbReference type="GO" id="GO:0004160">
    <property type="term" value="F:dihydroxy-acid dehydratase activity"/>
    <property type="evidence" value="ECO:0007669"/>
    <property type="project" value="UniProtKB-UniRule"/>
</dbReference>
<dbReference type="GO" id="GO:0000287">
    <property type="term" value="F:magnesium ion binding"/>
    <property type="evidence" value="ECO:0007669"/>
    <property type="project" value="UniProtKB-UniRule"/>
</dbReference>
<dbReference type="GO" id="GO:0009097">
    <property type="term" value="P:isoleucine biosynthetic process"/>
    <property type="evidence" value="ECO:0007669"/>
    <property type="project" value="UniProtKB-UniRule"/>
</dbReference>
<dbReference type="GO" id="GO:0009099">
    <property type="term" value="P:L-valine biosynthetic process"/>
    <property type="evidence" value="ECO:0007669"/>
    <property type="project" value="UniProtKB-UniRule"/>
</dbReference>
<dbReference type="FunFam" id="3.50.30.80:FF:000001">
    <property type="entry name" value="Dihydroxy-acid dehydratase"/>
    <property type="match status" value="1"/>
</dbReference>
<dbReference type="Gene3D" id="3.50.30.80">
    <property type="entry name" value="IlvD/EDD C-terminal domain-like"/>
    <property type="match status" value="1"/>
</dbReference>
<dbReference type="HAMAP" id="MF_00012">
    <property type="entry name" value="IlvD"/>
    <property type="match status" value="1"/>
</dbReference>
<dbReference type="InterPro" id="IPR042096">
    <property type="entry name" value="Dihydro-acid_dehy_C"/>
</dbReference>
<dbReference type="InterPro" id="IPR004404">
    <property type="entry name" value="DihydroxyA_deHydtase"/>
</dbReference>
<dbReference type="InterPro" id="IPR020558">
    <property type="entry name" value="DiOHA_6PGluconate_deHydtase_CS"/>
</dbReference>
<dbReference type="InterPro" id="IPR056740">
    <property type="entry name" value="ILV_EDD_C"/>
</dbReference>
<dbReference type="InterPro" id="IPR000581">
    <property type="entry name" value="ILV_EDD_N"/>
</dbReference>
<dbReference type="InterPro" id="IPR037237">
    <property type="entry name" value="IlvD/EDD_N"/>
</dbReference>
<dbReference type="NCBIfam" id="TIGR00110">
    <property type="entry name" value="ilvD"/>
    <property type="match status" value="1"/>
</dbReference>
<dbReference type="NCBIfam" id="NF002068">
    <property type="entry name" value="PRK00911.1"/>
    <property type="match status" value="1"/>
</dbReference>
<dbReference type="PANTHER" id="PTHR43661">
    <property type="entry name" value="D-XYLONATE DEHYDRATASE"/>
    <property type="match status" value="1"/>
</dbReference>
<dbReference type="PANTHER" id="PTHR43661:SF3">
    <property type="entry name" value="D-XYLONATE DEHYDRATASE YAGF-RELATED"/>
    <property type="match status" value="1"/>
</dbReference>
<dbReference type="Pfam" id="PF24877">
    <property type="entry name" value="ILV_EDD_C"/>
    <property type="match status" value="1"/>
</dbReference>
<dbReference type="Pfam" id="PF00920">
    <property type="entry name" value="ILVD_EDD_N"/>
    <property type="match status" value="1"/>
</dbReference>
<dbReference type="SUPFAM" id="SSF143975">
    <property type="entry name" value="IlvD/EDD N-terminal domain-like"/>
    <property type="match status" value="1"/>
</dbReference>
<dbReference type="SUPFAM" id="SSF52016">
    <property type="entry name" value="LeuD/IlvD-like"/>
    <property type="match status" value="1"/>
</dbReference>
<dbReference type="PROSITE" id="PS00886">
    <property type="entry name" value="ILVD_EDD_1"/>
    <property type="match status" value="1"/>
</dbReference>
<dbReference type="PROSITE" id="PS00887">
    <property type="entry name" value="ILVD_EDD_2"/>
    <property type="match status" value="1"/>
</dbReference>
<organism>
    <name type="scientific">Desulfatibacillum aliphaticivorans</name>
    <dbReference type="NCBI Taxonomy" id="218208"/>
    <lineage>
        <taxon>Bacteria</taxon>
        <taxon>Pseudomonadati</taxon>
        <taxon>Thermodesulfobacteriota</taxon>
        <taxon>Desulfobacteria</taxon>
        <taxon>Desulfobacterales</taxon>
        <taxon>Desulfatibacillaceae</taxon>
        <taxon>Desulfatibacillum</taxon>
    </lineage>
</organism>
<reference key="1">
    <citation type="journal article" date="2012" name="Environ. Microbiol.">
        <title>The genome sequence of Desulfatibacillum alkenivorans AK-01: a blueprint for anaerobic alkane oxidation.</title>
        <authorList>
            <person name="Callaghan A.V."/>
            <person name="Morris B.E."/>
            <person name="Pereira I.A."/>
            <person name="McInerney M.J."/>
            <person name="Austin R.N."/>
            <person name="Groves J.T."/>
            <person name="Kukor J.J."/>
            <person name="Suflita J.M."/>
            <person name="Young L.Y."/>
            <person name="Zylstra G.J."/>
            <person name="Wawrik B."/>
        </authorList>
    </citation>
    <scope>NUCLEOTIDE SEQUENCE [LARGE SCALE GENOMIC DNA]</scope>
    <source>
        <strain>AK-01</strain>
    </source>
</reference>
<sequence>MKSDNVRIGLERAPHRSLFKAMGYTDEELNRPLIGVANPMNAVIPGHVHLNNIAEAVQKGIYLAGGTPAIFGGIGVCDGIAMNHAGMKYSLASREIIADSVEIMATAHAFDGLVLICNCDKIVPGMLMAAARIDIPTVIISGGPMLAGSHPNVKNGEKIDLITVFEGVGAVKSGKMTEEELSLMEDEACPTCGSCAGMFTANSMNCLTEVIGMGLPGNGTIPAVMASRIRLAKQAGMAVMDMVEKNITPSQIMTPEAFANALAVDMALGCSTNTALHLPAIAHEAGVEFNLKQINEISARIPHLCQLSPGGYHRIEDLNRAGGIQAVLSELIKHNLINTDCITVTGKSVGENASKARILDPEVIRSVETPYHKEGGLAVLFGNVAPEGCVVKQSAVVDKMLVHEGPARVFDSEDEASKAIMDGLIKKGDVVVVRYEGPKGGPGMREMLTPTSVIAGMGLDADVALITDGRFSGGTRGAAIGHVSPEAMSGGPIAAVREGDIIKINIPEKTIALDVPEEEIKARMAGWTPPEPKITKGYMARYARNVESASKGAVVL</sequence>
<protein>
    <recommendedName>
        <fullName evidence="1">Dihydroxy-acid dehydratase</fullName>
        <shortName evidence="1">DAD</shortName>
        <ecNumber evidence="1">4.2.1.9</ecNumber>
    </recommendedName>
</protein>
<comment type="function">
    <text evidence="1">Functions in the biosynthesis of branched-chain amino acids. Catalyzes the dehydration of (2R,3R)-2,3-dihydroxy-3-methylpentanoate (2,3-dihydroxy-3-methylvalerate) into 2-oxo-3-methylpentanoate (2-oxo-3-methylvalerate) and of (2R)-2,3-dihydroxy-3-methylbutanoate (2,3-dihydroxyisovalerate) into 2-oxo-3-methylbutanoate (2-oxoisovalerate), the penultimate precursor to L-isoleucine and L-valine, respectively.</text>
</comment>
<comment type="catalytic activity">
    <reaction evidence="1">
        <text>(2R)-2,3-dihydroxy-3-methylbutanoate = 3-methyl-2-oxobutanoate + H2O</text>
        <dbReference type="Rhea" id="RHEA:24809"/>
        <dbReference type="ChEBI" id="CHEBI:11851"/>
        <dbReference type="ChEBI" id="CHEBI:15377"/>
        <dbReference type="ChEBI" id="CHEBI:49072"/>
        <dbReference type="EC" id="4.2.1.9"/>
    </reaction>
    <physiologicalReaction direction="left-to-right" evidence="1">
        <dbReference type="Rhea" id="RHEA:24810"/>
    </physiologicalReaction>
</comment>
<comment type="catalytic activity">
    <reaction evidence="1">
        <text>(2R,3R)-2,3-dihydroxy-3-methylpentanoate = (S)-3-methyl-2-oxopentanoate + H2O</text>
        <dbReference type="Rhea" id="RHEA:27694"/>
        <dbReference type="ChEBI" id="CHEBI:15377"/>
        <dbReference type="ChEBI" id="CHEBI:35146"/>
        <dbReference type="ChEBI" id="CHEBI:49258"/>
        <dbReference type="EC" id="4.2.1.9"/>
    </reaction>
    <physiologicalReaction direction="left-to-right" evidence="1">
        <dbReference type="Rhea" id="RHEA:27695"/>
    </physiologicalReaction>
</comment>
<comment type="cofactor">
    <cofactor evidence="1">
        <name>[2Fe-2S] cluster</name>
        <dbReference type="ChEBI" id="CHEBI:190135"/>
    </cofactor>
    <text evidence="1">Binds 1 [2Fe-2S] cluster per subunit. This cluster acts as a Lewis acid cofactor.</text>
</comment>
<comment type="cofactor">
    <cofactor evidence="1">
        <name>Mg(2+)</name>
        <dbReference type="ChEBI" id="CHEBI:18420"/>
    </cofactor>
</comment>
<comment type="pathway">
    <text evidence="1">Amino-acid biosynthesis; L-isoleucine biosynthesis; L-isoleucine from 2-oxobutanoate: step 3/4.</text>
</comment>
<comment type="pathway">
    <text evidence="1">Amino-acid biosynthesis; L-valine biosynthesis; L-valine from pyruvate: step 3/4.</text>
</comment>
<comment type="subunit">
    <text evidence="1">Homodimer.</text>
</comment>
<comment type="similarity">
    <text evidence="1">Belongs to the IlvD/Edd family.</text>
</comment>
<name>ILVD_DESAL</name>
<gene>
    <name evidence="1" type="primary">ilvD</name>
    <name type="ordered locus">Dalk_0559</name>
</gene>
<feature type="chain" id="PRO_1000116267" description="Dihydroxy-acid dehydratase">
    <location>
        <begin position="1"/>
        <end position="556"/>
    </location>
</feature>
<feature type="active site" description="Proton acceptor" evidence="1">
    <location>
        <position position="472"/>
    </location>
</feature>
<feature type="binding site" evidence="1">
    <location>
        <position position="78"/>
    </location>
    <ligand>
        <name>Mg(2+)</name>
        <dbReference type="ChEBI" id="CHEBI:18420"/>
    </ligand>
</feature>
<feature type="binding site" evidence="1">
    <location>
        <position position="119"/>
    </location>
    <ligand>
        <name>[2Fe-2S] cluster</name>
        <dbReference type="ChEBI" id="CHEBI:190135"/>
    </ligand>
</feature>
<feature type="binding site" evidence="1">
    <location>
        <position position="120"/>
    </location>
    <ligand>
        <name>Mg(2+)</name>
        <dbReference type="ChEBI" id="CHEBI:18420"/>
    </ligand>
</feature>
<feature type="binding site" description="via carbamate group" evidence="1">
    <location>
        <position position="121"/>
    </location>
    <ligand>
        <name>Mg(2+)</name>
        <dbReference type="ChEBI" id="CHEBI:18420"/>
    </ligand>
</feature>
<feature type="binding site" evidence="1">
    <location>
        <position position="195"/>
    </location>
    <ligand>
        <name>[2Fe-2S] cluster</name>
        <dbReference type="ChEBI" id="CHEBI:190135"/>
    </ligand>
</feature>
<feature type="binding site" evidence="1">
    <location>
        <position position="446"/>
    </location>
    <ligand>
        <name>Mg(2+)</name>
        <dbReference type="ChEBI" id="CHEBI:18420"/>
    </ligand>
</feature>
<feature type="modified residue" description="N6-carboxylysine" evidence="1">
    <location>
        <position position="121"/>
    </location>
</feature>
<keyword id="KW-0001">2Fe-2S</keyword>
<keyword id="KW-0028">Amino-acid biosynthesis</keyword>
<keyword id="KW-0100">Branched-chain amino acid biosynthesis</keyword>
<keyword id="KW-0408">Iron</keyword>
<keyword id="KW-0411">Iron-sulfur</keyword>
<keyword id="KW-0456">Lyase</keyword>
<keyword id="KW-0460">Magnesium</keyword>
<keyword id="KW-0479">Metal-binding</keyword>
<keyword id="KW-1185">Reference proteome</keyword>
<proteinExistence type="inferred from homology"/>